<comment type="function">
    <text evidence="1">Involved in unsaturated fatty acids biosynthesis. Catalyzes the dehydration of short chain beta-hydroxyacyl-ACPs and long chain saturated and unsaturated beta-hydroxyacyl-ACPs.</text>
</comment>
<comment type="catalytic activity">
    <reaction evidence="1">
        <text>a (3R)-hydroxyacyl-[ACP] = a (2E)-enoyl-[ACP] + H2O</text>
        <dbReference type="Rhea" id="RHEA:13097"/>
        <dbReference type="Rhea" id="RHEA-COMP:9925"/>
        <dbReference type="Rhea" id="RHEA-COMP:9945"/>
        <dbReference type="ChEBI" id="CHEBI:15377"/>
        <dbReference type="ChEBI" id="CHEBI:78784"/>
        <dbReference type="ChEBI" id="CHEBI:78827"/>
        <dbReference type="EC" id="4.2.1.59"/>
    </reaction>
</comment>
<comment type="subcellular location">
    <subcellularLocation>
        <location evidence="1">Cytoplasm</location>
    </subcellularLocation>
</comment>
<comment type="similarity">
    <text evidence="1">Belongs to the thioester dehydratase family. FabZ subfamily.</text>
</comment>
<protein>
    <recommendedName>
        <fullName evidence="1">3-hydroxyacyl-[acyl-carrier-protein] dehydratase FabZ</fullName>
        <ecNumber evidence="1">4.2.1.59</ecNumber>
    </recommendedName>
    <alternativeName>
        <fullName evidence="1">(3R)-hydroxymyristoyl-[acyl-carrier-protein] dehydratase</fullName>
        <shortName evidence="1">(3R)-hydroxymyristoyl-ACP dehydrase</shortName>
    </alternativeName>
    <alternativeName>
        <fullName evidence="1">Beta-hydroxyacyl-ACP dehydratase</fullName>
    </alternativeName>
</protein>
<proteinExistence type="inferred from homology"/>
<dbReference type="EC" id="4.2.1.59" evidence="1"/>
<dbReference type="EMBL" id="CP000702">
    <property type="protein sequence ID" value="ABQ46156.1"/>
    <property type="molecule type" value="Genomic_DNA"/>
</dbReference>
<dbReference type="RefSeq" id="WP_004080862.1">
    <property type="nucleotide sequence ID" value="NC_009486.1"/>
</dbReference>
<dbReference type="SMR" id="A5IIY3"/>
<dbReference type="STRING" id="390874.Tpet_0127"/>
<dbReference type="KEGG" id="tpt:Tpet_0127"/>
<dbReference type="eggNOG" id="COG0764">
    <property type="taxonomic scope" value="Bacteria"/>
</dbReference>
<dbReference type="HOGENOM" id="CLU_078912_1_2_0"/>
<dbReference type="Proteomes" id="UP000006558">
    <property type="component" value="Chromosome"/>
</dbReference>
<dbReference type="GO" id="GO:0005737">
    <property type="term" value="C:cytoplasm"/>
    <property type="evidence" value="ECO:0007669"/>
    <property type="project" value="UniProtKB-SubCell"/>
</dbReference>
<dbReference type="GO" id="GO:0016020">
    <property type="term" value="C:membrane"/>
    <property type="evidence" value="ECO:0007669"/>
    <property type="project" value="GOC"/>
</dbReference>
<dbReference type="GO" id="GO:0019171">
    <property type="term" value="F:(3R)-hydroxyacyl-[acyl-carrier-protein] dehydratase activity"/>
    <property type="evidence" value="ECO:0007669"/>
    <property type="project" value="UniProtKB-EC"/>
</dbReference>
<dbReference type="GO" id="GO:0006633">
    <property type="term" value="P:fatty acid biosynthetic process"/>
    <property type="evidence" value="ECO:0007669"/>
    <property type="project" value="UniProtKB-UniRule"/>
</dbReference>
<dbReference type="GO" id="GO:0009245">
    <property type="term" value="P:lipid A biosynthetic process"/>
    <property type="evidence" value="ECO:0007669"/>
    <property type="project" value="UniProtKB-UniRule"/>
</dbReference>
<dbReference type="CDD" id="cd01288">
    <property type="entry name" value="FabZ"/>
    <property type="match status" value="1"/>
</dbReference>
<dbReference type="FunFam" id="3.10.129.10:FF:000001">
    <property type="entry name" value="3-hydroxyacyl-[acyl-carrier-protein] dehydratase FabZ"/>
    <property type="match status" value="1"/>
</dbReference>
<dbReference type="Gene3D" id="3.10.129.10">
    <property type="entry name" value="Hotdog Thioesterase"/>
    <property type="match status" value="1"/>
</dbReference>
<dbReference type="HAMAP" id="MF_00406">
    <property type="entry name" value="FabZ"/>
    <property type="match status" value="1"/>
</dbReference>
<dbReference type="InterPro" id="IPR013114">
    <property type="entry name" value="FabA_FabZ"/>
</dbReference>
<dbReference type="InterPro" id="IPR010084">
    <property type="entry name" value="FabZ"/>
</dbReference>
<dbReference type="InterPro" id="IPR029069">
    <property type="entry name" value="HotDog_dom_sf"/>
</dbReference>
<dbReference type="NCBIfam" id="TIGR01750">
    <property type="entry name" value="fabZ"/>
    <property type="match status" value="1"/>
</dbReference>
<dbReference type="NCBIfam" id="NF000582">
    <property type="entry name" value="PRK00006.1"/>
    <property type="match status" value="1"/>
</dbReference>
<dbReference type="PANTHER" id="PTHR30272">
    <property type="entry name" value="3-HYDROXYACYL-[ACYL-CARRIER-PROTEIN] DEHYDRATASE"/>
    <property type="match status" value="1"/>
</dbReference>
<dbReference type="PANTHER" id="PTHR30272:SF1">
    <property type="entry name" value="3-HYDROXYACYL-[ACYL-CARRIER-PROTEIN] DEHYDRATASE"/>
    <property type="match status" value="1"/>
</dbReference>
<dbReference type="Pfam" id="PF07977">
    <property type="entry name" value="FabA"/>
    <property type="match status" value="1"/>
</dbReference>
<dbReference type="SUPFAM" id="SSF54637">
    <property type="entry name" value="Thioesterase/thiol ester dehydrase-isomerase"/>
    <property type="match status" value="1"/>
</dbReference>
<accession>A5IIY3</accession>
<gene>
    <name evidence="1" type="primary">fabZ</name>
    <name type="ordered locus">Tpet_0127</name>
</gene>
<reference key="1">
    <citation type="submission" date="2007-05" db="EMBL/GenBank/DDBJ databases">
        <title>Complete sequence of Thermotoga petrophila RKU-1.</title>
        <authorList>
            <consortium name="US DOE Joint Genome Institute"/>
            <person name="Copeland A."/>
            <person name="Lucas S."/>
            <person name="Lapidus A."/>
            <person name="Barry K."/>
            <person name="Glavina del Rio T."/>
            <person name="Dalin E."/>
            <person name="Tice H."/>
            <person name="Pitluck S."/>
            <person name="Sims D."/>
            <person name="Brettin T."/>
            <person name="Bruce D."/>
            <person name="Detter J.C."/>
            <person name="Han C."/>
            <person name="Tapia R."/>
            <person name="Schmutz J."/>
            <person name="Larimer F."/>
            <person name="Land M."/>
            <person name="Hauser L."/>
            <person name="Kyrpides N."/>
            <person name="Mikhailova N."/>
            <person name="Nelson K."/>
            <person name="Gogarten J.P."/>
            <person name="Noll K."/>
            <person name="Richardson P."/>
        </authorList>
    </citation>
    <scope>NUCLEOTIDE SEQUENCE [LARGE SCALE GENOMIC DNA]</scope>
    <source>
        <strain>ATCC BAA-488 / DSM 13995 / JCM 10881 / RKU-1</strain>
    </source>
</reference>
<evidence type="ECO:0000255" key="1">
    <source>
        <dbReference type="HAMAP-Rule" id="MF_00406"/>
    </source>
</evidence>
<organism>
    <name type="scientific">Thermotoga petrophila (strain ATCC BAA-488 / DSM 13995 / JCM 10881 / RKU-1)</name>
    <dbReference type="NCBI Taxonomy" id="390874"/>
    <lineage>
        <taxon>Bacteria</taxon>
        <taxon>Thermotogati</taxon>
        <taxon>Thermotogota</taxon>
        <taxon>Thermotogae</taxon>
        <taxon>Thermotogales</taxon>
        <taxon>Thermotogaceae</taxon>
        <taxon>Thermotoga</taxon>
    </lineage>
</organism>
<sequence length="137" mass="15300">MNIDYVKSILPHRYPFLLVDGVIEESEDRIVAFKNISISDPVFQGHFPEYPIYPGVLIVEGLAQTAGILLLKSVEGIPLFLGIDEARFKKEVRPGDRLIYEVRKLGEKLGTVQVEGVAKVDDKIVAKARLLLGVKKK</sequence>
<feature type="chain" id="PRO_1000049865" description="3-hydroxyacyl-[acyl-carrier-protein] dehydratase FabZ">
    <location>
        <begin position="1"/>
        <end position="137"/>
    </location>
</feature>
<feature type="active site" evidence="1">
    <location>
        <position position="46"/>
    </location>
</feature>
<keyword id="KW-0963">Cytoplasm</keyword>
<keyword id="KW-0441">Lipid A biosynthesis</keyword>
<keyword id="KW-0444">Lipid biosynthesis</keyword>
<keyword id="KW-0443">Lipid metabolism</keyword>
<keyword id="KW-0456">Lyase</keyword>
<name>FABZ_THEP1</name>